<dbReference type="EMBL" id="AJ225047">
    <property type="protein sequence ID" value="CAA12388.1"/>
    <property type="molecule type" value="mRNA"/>
</dbReference>
<dbReference type="SMR" id="O82011"/>
<dbReference type="GO" id="GO:0005737">
    <property type="term" value="C:cytoplasm"/>
    <property type="evidence" value="ECO:0007669"/>
    <property type="project" value="UniProtKB-SubCell"/>
</dbReference>
<dbReference type="CDD" id="cd06472">
    <property type="entry name" value="ACD_ScHsp26_like"/>
    <property type="match status" value="1"/>
</dbReference>
<dbReference type="FunFam" id="2.60.40.790:FF:000009">
    <property type="entry name" value="17.6 kDa class I heat shock protein-like"/>
    <property type="match status" value="1"/>
</dbReference>
<dbReference type="Gene3D" id="2.60.40.790">
    <property type="match status" value="1"/>
</dbReference>
<dbReference type="InterPro" id="IPR002068">
    <property type="entry name" value="A-crystallin/Hsp20_dom"/>
</dbReference>
<dbReference type="InterPro" id="IPR008978">
    <property type="entry name" value="HSP20-like_chaperone"/>
</dbReference>
<dbReference type="InterPro" id="IPR031107">
    <property type="entry name" value="Small_HSP"/>
</dbReference>
<dbReference type="PANTHER" id="PTHR11527">
    <property type="entry name" value="HEAT-SHOCK PROTEIN 20 FAMILY MEMBER"/>
    <property type="match status" value="1"/>
</dbReference>
<dbReference type="Pfam" id="PF00011">
    <property type="entry name" value="HSP20"/>
    <property type="match status" value="1"/>
</dbReference>
<dbReference type="SUPFAM" id="SSF49764">
    <property type="entry name" value="HSP20-like chaperones"/>
    <property type="match status" value="1"/>
</dbReference>
<dbReference type="PROSITE" id="PS01031">
    <property type="entry name" value="SHSP"/>
    <property type="match status" value="1"/>
</dbReference>
<organism>
    <name type="scientific">Solanum peruvianum</name>
    <name type="common">Peruvian tomato</name>
    <name type="synonym">Lycopersicon peruvianum</name>
    <dbReference type="NCBI Taxonomy" id="4082"/>
    <lineage>
        <taxon>Eukaryota</taxon>
        <taxon>Viridiplantae</taxon>
        <taxon>Streptophyta</taxon>
        <taxon>Embryophyta</taxon>
        <taxon>Tracheophyta</taxon>
        <taxon>Spermatophyta</taxon>
        <taxon>Magnoliopsida</taxon>
        <taxon>eudicotyledons</taxon>
        <taxon>Gunneridae</taxon>
        <taxon>Pentapetalae</taxon>
        <taxon>asterids</taxon>
        <taxon>lamiids</taxon>
        <taxon>Solanales</taxon>
        <taxon>Solanaceae</taxon>
        <taxon>Solanoideae</taxon>
        <taxon>Solaneae</taxon>
        <taxon>Solanum</taxon>
        <taxon>Solanum subgen. Lycopersicon</taxon>
    </lineage>
</organism>
<reference key="1">
    <citation type="online journal article" date="1998" name="Plant Gene Register">
        <title>Cloning and characterization of two different cDNAs coding for cytoplasmic small heat stress proteins in Lycopersicon peruvianum.</title>
        <authorList>
            <person name="Forreiter C."/>
            <person name="Loew D."/>
        </authorList>
        <locator>PGR98-095</locator>
    </citation>
    <scope>NUCLEOTIDE SEQUENCE [MRNA]</scope>
    <scope>INDUCTION</scope>
</reference>
<comment type="subunit">
    <text evidence="1">Forms oligomeric structures.</text>
</comment>
<comment type="subcellular location">
    <subcellularLocation>
        <location evidence="1">Cytoplasm</location>
    </subcellularLocation>
</comment>
<comment type="induction">
    <text evidence="3">By heat stress.</text>
</comment>
<comment type="similarity">
    <text evidence="2">Belongs to the small heat shock protein (HSP20) family.</text>
</comment>
<evidence type="ECO:0000250" key="1"/>
<evidence type="ECO:0000255" key="2">
    <source>
        <dbReference type="PROSITE-ProRule" id="PRU00285"/>
    </source>
</evidence>
<evidence type="ECO:0000269" key="3">
    <source ref="1"/>
</evidence>
<accession>O82011</accession>
<proteinExistence type="evidence at transcript level"/>
<keyword id="KW-0963">Cytoplasm</keyword>
<keyword id="KW-0346">Stress response</keyword>
<sequence>MSLIPRIFGDRRSSSMFDPFSIDVFDPFRELGFPGTNSGETSAFANTRIDWKETPEAHVFKADLPGLKLEEVKVEVEEDRVLQISGERNMEKEDKNDKWQRVERSSGKFMRRFRLPENAKMDQVKASMENGVLTVTVPKEEMKKPDVKSIEISG</sequence>
<protein>
    <recommendedName>
        <fullName>17.7 kDa class I heat shock protein</fullName>
    </recommendedName>
    <alternativeName>
        <fullName>Hsp19.9</fullName>
    </alternativeName>
</protein>
<name>HSP11_SOLPE</name>
<feature type="chain" id="PRO_0000252662" description="17.7 kDa class I heat shock protein">
    <location>
        <begin position="1"/>
        <end position="154"/>
    </location>
</feature>
<feature type="domain" description="sHSP" evidence="2">
    <location>
        <begin position="40"/>
        <end position="154"/>
    </location>
</feature>